<dbReference type="EC" id="4.1.1.19"/>
<dbReference type="EMBL" id="AE001363">
    <property type="protein sequence ID" value="AAD19169.1"/>
    <property type="molecule type" value="Genomic_DNA"/>
</dbReference>
<dbReference type="EMBL" id="AE002161">
    <property type="protein sequence ID" value="AAF38615.1"/>
    <property type="molecule type" value="Genomic_DNA"/>
</dbReference>
<dbReference type="EMBL" id="BA000008">
    <property type="protein sequence ID" value="BAA99239.1"/>
    <property type="molecule type" value="Genomic_DNA"/>
</dbReference>
<dbReference type="EMBL" id="AE009440">
    <property type="protein sequence ID" value="AAP99001.1"/>
    <property type="molecule type" value="Genomic_DNA"/>
</dbReference>
<dbReference type="PIR" id="B72006">
    <property type="entry name" value="B72006"/>
</dbReference>
<dbReference type="PIR" id="E86619">
    <property type="entry name" value="E86619"/>
</dbReference>
<dbReference type="RefSeq" id="NP_225226.1">
    <property type="nucleotide sequence ID" value="NC_000922.1"/>
</dbReference>
<dbReference type="RefSeq" id="WP_010883665.1">
    <property type="nucleotide sequence ID" value="NZ_LN847257.1"/>
</dbReference>
<dbReference type="SMR" id="Q9Z6M7"/>
<dbReference type="STRING" id="406984.CPK_ORF00459"/>
<dbReference type="GeneID" id="45051090"/>
<dbReference type="KEGG" id="cpa:CP_0820"/>
<dbReference type="KEGG" id="cpj:CPj1032"/>
<dbReference type="KEGG" id="cpn:CPn_1032"/>
<dbReference type="KEGG" id="cpt:CpB1072"/>
<dbReference type="PATRIC" id="fig|115713.3.peg.1130"/>
<dbReference type="eggNOG" id="COG1945">
    <property type="taxonomic scope" value="Bacteria"/>
</dbReference>
<dbReference type="HOGENOM" id="CLU_1313366_0_0_0"/>
<dbReference type="OMA" id="KKKFGFC"/>
<dbReference type="OrthoDB" id="9783061at2"/>
<dbReference type="SABIO-RK" id="Q9Z6M7"/>
<dbReference type="Proteomes" id="UP000000583">
    <property type="component" value="Chromosome"/>
</dbReference>
<dbReference type="Proteomes" id="UP000000801">
    <property type="component" value="Chromosome"/>
</dbReference>
<dbReference type="GO" id="GO:0005737">
    <property type="term" value="C:cytoplasm"/>
    <property type="evidence" value="ECO:0007669"/>
    <property type="project" value="UniProtKB-SubCell"/>
</dbReference>
<dbReference type="GO" id="GO:0008792">
    <property type="term" value="F:arginine decarboxylase activity"/>
    <property type="evidence" value="ECO:0007669"/>
    <property type="project" value="UniProtKB-EC"/>
</dbReference>
<dbReference type="GO" id="GO:0006527">
    <property type="term" value="P:arginine catabolic process"/>
    <property type="evidence" value="ECO:0007669"/>
    <property type="project" value="InterPro"/>
</dbReference>
<dbReference type="Gene3D" id="3.50.20.10">
    <property type="entry name" value="Pyruvoyl-Dependent Histidine Decarboxylase, subunit B"/>
    <property type="match status" value="1"/>
</dbReference>
<dbReference type="InterPro" id="IPR016104">
    <property type="entry name" value="Pyr-dep_his/arg-deCO2ase"/>
</dbReference>
<dbReference type="InterPro" id="IPR016105">
    <property type="entry name" value="Pyr-dep_his/arg-deCO2ase_sand"/>
</dbReference>
<dbReference type="InterPro" id="IPR002724">
    <property type="entry name" value="Pyruvoyl-dep_arg_deCO2ase"/>
</dbReference>
<dbReference type="PANTHER" id="PTHR40438">
    <property type="entry name" value="PYRUVOYL-DEPENDENT ARGININE DECARBOXYLASE"/>
    <property type="match status" value="1"/>
</dbReference>
<dbReference type="PANTHER" id="PTHR40438:SF1">
    <property type="entry name" value="PYRUVOYL-DEPENDENT ARGININE DECARBOXYLASE"/>
    <property type="match status" value="1"/>
</dbReference>
<dbReference type="Pfam" id="PF01862">
    <property type="entry name" value="PvlArgDC"/>
    <property type="match status" value="1"/>
</dbReference>
<dbReference type="SFLD" id="SFLDG01170">
    <property type="entry name" value="Pyruvoyl-dependent_arginine_de"/>
    <property type="match status" value="1"/>
</dbReference>
<dbReference type="SUPFAM" id="SSF56271">
    <property type="entry name" value="Pyruvoyl-dependent histidine and arginine decarboxylases"/>
    <property type="match status" value="1"/>
</dbReference>
<gene>
    <name type="primary">aaxB</name>
    <name type="ordered locus">CPn_1032</name>
    <name type="ordered locus">CP_0820</name>
    <name type="ordered locus">CPj1032</name>
    <name type="ordered locus">CpB1072</name>
</gene>
<comment type="function">
    <text evidence="2">Part of the AaxABC system, catalyzes the decarboxylation of L-arginine. The arginine uptake by the bacterium in the macrophage may be a virulence factor against the host innate immune response.</text>
</comment>
<comment type="catalytic activity">
    <reaction>
        <text>L-arginine + H(+) = agmatine + CO2</text>
        <dbReference type="Rhea" id="RHEA:17641"/>
        <dbReference type="ChEBI" id="CHEBI:15378"/>
        <dbReference type="ChEBI" id="CHEBI:16526"/>
        <dbReference type="ChEBI" id="CHEBI:32682"/>
        <dbReference type="ChEBI" id="CHEBI:58145"/>
        <dbReference type="EC" id="4.1.1.19"/>
    </reaction>
</comment>
<comment type="cofactor">
    <cofactor>
        <name>pyruvate</name>
        <dbReference type="ChEBI" id="CHEBI:15361"/>
    </cofactor>
    <text>Binds 1 pyruvoyl group covalently per subunit.</text>
</comment>
<comment type="activity regulation">
    <text>Inhibited by argininamide.</text>
</comment>
<comment type="biophysicochemical properties">
    <kinetics>
        <KM evidence="1">5 mM for L-arginine</KM>
    </kinetics>
    <phDependence>
        <text evidence="1">Optimum pH is 3.4.</text>
    </phDependence>
    <temperatureDependence>
        <text evidence="1">Thermostable. Retains 48% activity at 50 degrees Celsius, and 13% activity at 100 degrees Celsius.</text>
    </temperatureDependence>
</comment>
<comment type="subunit">
    <text>Trimer of an alpha-beta dimer.</text>
</comment>
<comment type="subcellular location">
    <subcellularLocation>
        <location evidence="3">Cytoplasm</location>
    </subcellularLocation>
</comment>
<comment type="mass spectrometry">
    <molecule>Pyruvoyl-dependent arginine decarboxylase subunit alpha</molecule>
</comment>
<comment type="similarity">
    <text evidence="3">Belongs to the pyruvoyl-dependent arginine decarboxylase family.</text>
</comment>
<name>AAXB_CHLPN</name>
<accession>Q9Z6M7</accession>
<accession>Q7AHX1</accession>
<accession>Q7BWL3</accession>
<accession>Q7DE85</accession>
<proteinExistence type="evidence at protein level"/>
<reference key="1">
    <citation type="journal article" date="1999" name="Nat. Genet.">
        <title>Comparative genomes of Chlamydia pneumoniae and C. trachomatis.</title>
        <authorList>
            <person name="Kalman S."/>
            <person name="Mitchell W.P."/>
            <person name="Marathe R."/>
            <person name="Lammel C.J."/>
            <person name="Fan J."/>
            <person name="Hyman R.W."/>
            <person name="Olinger L."/>
            <person name="Grimwood J."/>
            <person name="Davis R.W."/>
            <person name="Stephens R.S."/>
        </authorList>
    </citation>
    <scope>NUCLEOTIDE SEQUENCE [LARGE SCALE GENOMIC DNA]</scope>
    <source>
        <strain>CWL029</strain>
    </source>
</reference>
<reference key="2">
    <citation type="journal article" date="2000" name="Nucleic Acids Res.">
        <title>Genome sequences of Chlamydia trachomatis MoPn and Chlamydia pneumoniae AR39.</title>
        <authorList>
            <person name="Read T.D."/>
            <person name="Brunham R.C."/>
            <person name="Shen C."/>
            <person name="Gill S.R."/>
            <person name="Heidelberg J.F."/>
            <person name="White O."/>
            <person name="Hickey E.K."/>
            <person name="Peterson J.D."/>
            <person name="Utterback T.R."/>
            <person name="Berry K.J."/>
            <person name="Bass S."/>
            <person name="Linher K.D."/>
            <person name="Weidman J.F."/>
            <person name="Khouri H.M."/>
            <person name="Craven B."/>
            <person name="Bowman C."/>
            <person name="Dodson R.J."/>
            <person name="Gwinn M.L."/>
            <person name="Nelson W.C."/>
            <person name="DeBoy R.T."/>
            <person name="Kolonay J.F."/>
            <person name="McClarty G."/>
            <person name="Salzberg S.L."/>
            <person name="Eisen J.A."/>
            <person name="Fraser C.M."/>
        </authorList>
    </citation>
    <scope>NUCLEOTIDE SEQUENCE [LARGE SCALE GENOMIC DNA]</scope>
    <source>
        <strain>AR39</strain>
    </source>
</reference>
<reference key="3">
    <citation type="journal article" date="2000" name="Nucleic Acids Res.">
        <title>Comparison of whole genome sequences of Chlamydia pneumoniae J138 from Japan and CWL029 from USA.</title>
        <authorList>
            <person name="Shirai M."/>
            <person name="Hirakawa H."/>
            <person name="Kimoto M."/>
            <person name="Tabuchi M."/>
            <person name="Kishi F."/>
            <person name="Ouchi K."/>
            <person name="Shiba T."/>
            <person name="Ishii K."/>
            <person name="Hattori M."/>
            <person name="Kuhara S."/>
            <person name="Nakazawa T."/>
        </authorList>
    </citation>
    <scope>NUCLEOTIDE SEQUENCE [LARGE SCALE GENOMIC DNA]</scope>
    <source>
        <strain>J138</strain>
    </source>
</reference>
<reference key="4">
    <citation type="submission" date="2002-05" db="EMBL/GenBank/DDBJ databases">
        <title>The genome sequence of Chlamydia pneumoniae TW183 and comparison with other Chlamydia strains based on whole genome sequence analysis.</title>
        <authorList>
            <person name="Geng M.M."/>
            <person name="Schuhmacher A."/>
            <person name="Muehldorfer I."/>
            <person name="Bensch K.W."/>
            <person name="Schaefer K.P."/>
            <person name="Schneider S."/>
            <person name="Pohl T."/>
            <person name="Essig A."/>
            <person name="Marre R."/>
            <person name="Melchers K."/>
        </authorList>
    </citation>
    <scope>NUCLEOTIDE SEQUENCE [LARGE SCALE GENOMIC DNA]</scope>
    <source>
        <strain>TW-183</strain>
    </source>
</reference>
<reference key="5">
    <citation type="journal article" date="2007" name="J. Bacteriol.">
        <title>Characterization of an acid-dependent arginine decarboxylase enzyme from Chlamydophila pneumoniae.</title>
        <authorList>
            <person name="Giles T.N."/>
            <person name="Graham D.E."/>
        </authorList>
    </citation>
    <scope>CHARACTERIZATION</scope>
    <scope>BIOPHYSICOCHEMICAL PROPERTIES</scope>
    <scope>MASS SPECTROMETRY</scope>
    <scope>MUTAGENESIS OF THR-52</scope>
    <scope>PYRUVATE FORMATION AT SER-53</scope>
    <source>
        <strain>Kajaani 6</strain>
    </source>
</reference>
<reference key="6">
    <citation type="journal article" date="2008" name="J. Bacteriol.">
        <title>Outer and inner membrane proteins compose an arginine-agmatine exchange system in Chlamydophila pneumoniae.</title>
        <authorList>
            <person name="Smith C.B."/>
            <person name="Graham D.E."/>
        </authorList>
    </citation>
    <scope>FUNCTION AS PYRUVOYL-DEPENDENT ARGININE DECARBOXYLASE</scope>
    <source>
        <strain>Kajaani 6</strain>
    </source>
</reference>
<sequence>MAYGTRYPTLAFHTGGIGESDDGMPPQPFETFCYDSALLQAKIENFNIVPYTSVLPKELFGNIVPVDTCVKSFKHGAVLEVIMAGRGAALSDGTHAIATGIGICWGKDKNGELIGGWAAEYVEFFPTWINDEIAETHAKMWLKKSLQHELDLRSIAKHSEFQFFHNYINIKQKFGFCLTALGFLNFENAEPAKVN</sequence>
<keyword id="KW-0963">Cytoplasm</keyword>
<keyword id="KW-0210">Decarboxylase</keyword>
<keyword id="KW-0456">Lyase</keyword>
<keyword id="KW-0670">Pyruvate</keyword>
<keyword id="KW-0843">Virulence</keyword>
<protein>
    <recommendedName>
        <fullName>Pyruvoyl-dependent arginine decarboxylase AaxB</fullName>
        <shortName>PvlArgDC</shortName>
        <ecNumber>4.1.1.19</ecNumber>
    </recommendedName>
    <alternativeName>
        <fullName>Biodegradative arginine decarboxylase</fullName>
    </alternativeName>
    <component>
        <recommendedName>
            <fullName>Pyruvoyl-dependent arginine decarboxylase subunit beta</fullName>
        </recommendedName>
    </component>
    <component>
        <recommendedName>
            <fullName>Pyruvoyl-dependent arginine decarboxylase subunit alpha</fullName>
        </recommendedName>
    </component>
</protein>
<feature type="chain" id="PRO_0000364033" description="Pyruvoyl-dependent arginine decarboxylase subunit beta">
    <location>
        <begin position="1"/>
        <end position="52"/>
    </location>
</feature>
<feature type="chain" id="PRO_0000364034" description="Pyruvoyl-dependent arginine decarboxylase subunit alpha">
    <location>
        <begin position="53"/>
        <end position="195"/>
    </location>
</feature>
<feature type="site" description="Cleavage (non-hydrolytic)">
    <location>
        <begin position="52"/>
        <end position="53"/>
    </location>
</feature>
<feature type="modified residue" description="Pyruvic acid (Ser)" evidence="1">
    <location>
        <position position="53"/>
    </location>
</feature>
<feature type="mutagenesis site" description="70% loss of activity. Significantly impaired in ability to self-cleave." evidence="1">
    <original>T</original>
    <variation>S</variation>
    <location>
        <position position="52"/>
    </location>
</feature>
<evidence type="ECO:0000269" key="1">
    <source>
    </source>
</evidence>
<evidence type="ECO:0000269" key="2">
    <source>
    </source>
</evidence>
<evidence type="ECO:0000305" key="3"/>
<organism>
    <name type="scientific">Chlamydia pneumoniae</name>
    <name type="common">Chlamydophila pneumoniae</name>
    <dbReference type="NCBI Taxonomy" id="83558"/>
    <lineage>
        <taxon>Bacteria</taxon>
        <taxon>Pseudomonadati</taxon>
        <taxon>Chlamydiota</taxon>
        <taxon>Chlamydiia</taxon>
        <taxon>Chlamydiales</taxon>
        <taxon>Chlamydiaceae</taxon>
        <taxon>Chlamydia/Chlamydophila group</taxon>
        <taxon>Chlamydia</taxon>
    </lineage>
</organism>